<feature type="chain" id="PRO_0000068334" description="Replication initiation protein">
    <location>
        <begin position="1"/>
        <end position="512"/>
    </location>
</feature>
<accession>Q9RMZ4</accession>
<accession>Q7CMA0</accession>
<organism>
    <name type="scientific">Bacillus anthracis</name>
    <dbReference type="NCBI Taxonomy" id="1392"/>
    <lineage>
        <taxon>Bacteria</taxon>
        <taxon>Bacillati</taxon>
        <taxon>Bacillota</taxon>
        <taxon>Bacilli</taxon>
        <taxon>Bacillales</taxon>
        <taxon>Bacillaceae</taxon>
        <taxon>Bacillus</taxon>
        <taxon>Bacillus cereus group</taxon>
    </lineage>
</organism>
<proteinExistence type="predicted"/>
<comment type="function">
    <text evidence="1">Essential for replication. Binds specifically to a 60-bp region corresponding to the putative origin of replication of pXO2. Also binds nonspecifically to single-stranded DNA with lower affinity.</text>
</comment>
<sequence length="512" mass="58152">MNTVQKAIELILHKGLRKYKSKNSKAGLVSIANQEKFESKVLNGKKNKKGSIFITRKKEDLRAKFGTRGVVLSSEEAVLDHVGQASHWTPNVYNFGTYGQNGLRTIVGHTEKNLQQINCFVIDIDSKSFPMTAINDVALNAGFGVPTMILETTKGYQVYYVLDKAVYVSNNKNFIAIKSAKRISQNLREMFADSLPNVDLTCNHFGFFRMPSVQNIVMFFEENVYTFKELQEWSKRQDDNKGNEQFHNVIESPFAKNAPVEQPKQMDELWFKQVISCTNVSPKQTKAGRNNAIFTLSLACFQSQYAIKDTMDLMDQFNSNLEQPLEHTEVRGIVMSAYSGKYQAAHKDYIERLLQTYGMGQASAFRAPSVLWKKHKKQRKDRVRSHWHEWEADIITFLSMNSNNKPVLYFTQSELCEALNVPRSTLNTVLKKSTKIYKTVEGKGKTAKTGLSTLGMLIAFALKENGKRRESYLNYLQGLFPKTGNILEQAKTSNVMEEQETLYGILEGLPAG</sequence>
<evidence type="ECO:0000269" key="1">
    <source>
    </source>
</evidence>
<name>REPS_BACAN</name>
<protein>
    <recommendedName>
        <fullName>Replication initiation protein</fullName>
    </recommendedName>
</protein>
<keyword id="KW-0235">DNA replication</keyword>
<keyword id="KW-0238">DNA-binding</keyword>
<keyword id="KW-0614">Plasmid</keyword>
<keyword id="KW-1185">Reference proteome</keyword>
<dbReference type="EMBL" id="AB017611">
    <property type="protein sequence ID" value="BAB82449.1"/>
    <property type="molecule type" value="Genomic_DNA"/>
</dbReference>
<dbReference type="EMBL" id="AF188935">
    <property type="protein sequence ID" value="AAF13643.1"/>
    <property type="molecule type" value="Genomic_DNA"/>
</dbReference>
<dbReference type="EMBL" id="AE011191">
    <property type="protein sequence ID" value="AAM26199.1"/>
    <property type="molecule type" value="Genomic_DNA"/>
</dbReference>
<dbReference type="EMBL" id="AE017335">
    <property type="protein sequence ID" value="AAT28969.2"/>
    <property type="molecule type" value="Genomic_DNA"/>
</dbReference>
<dbReference type="RefSeq" id="NP_053193.1">
    <property type="nucleotide sequence ID" value="NC_002146.1"/>
</dbReference>
<dbReference type="RefSeq" id="WP_001099042.1">
    <property type="nucleotide sequence ID" value="NZ_VTZL01000009.1"/>
</dbReference>
<dbReference type="IntAct" id="Q9RMZ4">
    <property type="interactions" value="1"/>
</dbReference>
<dbReference type="GeneID" id="45025349"/>
<dbReference type="KEGG" id="banh:HYU01_29195"/>
<dbReference type="KEGG" id="bar:GBAA_pXO2_0039"/>
<dbReference type="HOGENOM" id="CLU_042279_0_0_9"/>
<dbReference type="OMA" id="TCNHFGI"/>
<dbReference type="Proteomes" id="UP000000594">
    <property type="component" value="Plasmid pXO2"/>
</dbReference>
<dbReference type="GO" id="GO:0003677">
    <property type="term" value="F:DNA binding"/>
    <property type="evidence" value="ECO:0007669"/>
    <property type="project" value="UniProtKB-KW"/>
</dbReference>
<dbReference type="GO" id="GO:0006260">
    <property type="term" value="P:DNA replication"/>
    <property type="evidence" value="ECO:0007669"/>
    <property type="project" value="UniProtKB-KW"/>
</dbReference>
<dbReference type="InterPro" id="IPR014820">
    <property type="entry name" value="PriCT_1"/>
</dbReference>
<dbReference type="Pfam" id="PF08708">
    <property type="entry name" value="PriCT_1"/>
    <property type="match status" value="1"/>
</dbReference>
<geneLocation type="plasmid">
    <name>pXO2</name>
</geneLocation>
<gene>
    <name type="primary">repS</name>
    <name type="synonym">repA</name>
    <name type="ordered locus">pXO2-38</name>
    <name type="ordered locus">BXB0039</name>
    <name type="ordered locus">GBAA_pXO2_0039</name>
</gene>
<reference key="1">
    <citation type="submission" date="1998-09" db="EMBL/GenBank/DDBJ databases">
        <title>Cloning and characterization of replication origin of capsule plasmid pXO2.</title>
        <authorList>
            <person name="Uchida I."/>
            <person name="Makino S."/>
            <person name="Nichimori K."/>
        </authorList>
    </citation>
    <scope>NUCLEOTIDE SEQUENCE [GENOMIC DNA]</scope>
    <source>
        <strain>Sm</strain>
    </source>
</reference>
<reference key="2">
    <citation type="journal article" date="1999" name="J. Appl. Microbiol.">
        <title>Sequence, assembly and analysis of pXO1 and pXO2.</title>
        <authorList>
            <person name="Okinaka R.T."/>
            <person name="Cloud K."/>
            <person name="Hampton O."/>
            <person name="Hoffmaster A."/>
            <person name="Hill K.K."/>
            <person name="Keim P."/>
            <person name="Koehler T."/>
            <person name="Lamke G."/>
            <person name="Kumano S."/>
            <person name="Manter D."/>
            <person name="Martinez Y."/>
            <person name="Ricke D."/>
            <person name="Svensson R."/>
            <person name="Jackson P.J."/>
        </authorList>
    </citation>
    <scope>NUCLEOTIDE SEQUENCE [GENOMIC DNA]</scope>
    <source>
        <strain>Pasteur</strain>
    </source>
</reference>
<reference key="3">
    <citation type="journal article" date="2002" name="Science">
        <title>Comparative genome sequencing for discovery of novel polymorphisms in Bacillus anthracis.</title>
        <authorList>
            <person name="Read T.D."/>
            <person name="Salzberg S.L."/>
            <person name="Pop M."/>
            <person name="Shumway M.F."/>
            <person name="Umayam L."/>
            <person name="Jiang L."/>
            <person name="Holtzapple E."/>
            <person name="Busch J.D."/>
            <person name="Smith K.L."/>
            <person name="Schupp J.M."/>
            <person name="Solomon D."/>
            <person name="Keim P."/>
            <person name="Fraser C.M."/>
        </authorList>
    </citation>
    <scope>NUCLEOTIDE SEQUENCE [GENOMIC DNA]</scope>
    <source>
        <strain>Ames / isolate Florida / A2012</strain>
    </source>
</reference>
<reference key="4">
    <citation type="journal article" date="2009" name="J. Bacteriol.">
        <title>The complete genome sequence of Bacillus anthracis Ames 'Ancestor'.</title>
        <authorList>
            <person name="Ravel J."/>
            <person name="Jiang L."/>
            <person name="Stanley S.T."/>
            <person name="Wilson M.R."/>
            <person name="Decker R.S."/>
            <person name="Read T.D."/>
            <person name="Worsham P."/>
            <person name="Keim P.S."/>
            <person name="Salzberg S.L."/>
            <person name="Fraser-Liggett C.M."/>
            <person name="Rasko D.A."/>
        </authorList>
    </citation>
    <scope>NUCLEOTIDE SEQUENCE [LARGE SCALE GENOMIC DNA]</scope>
    <source>
        <strain>Ames ancestor</strain>
    </source>
</reference>
<reference key="5">
    <citation type="journal article" date="2004" name="J. Bacteriol.">
        <title>Isolation of a minireplicon of the virulence plasmid pXO2 of Bacillus anthracis and characterization of the plasmid-encoded RepS replication protein.</title>
        <authorList>
            <person name="Tinsley E."/>
            <person name="Naqvi A."/>
            <person name="Bourgogne A."/>
            <person name="Koehler T.M."/>
            <person name="Khan S.A."/>
        </authorList>
    </citation>
    <scope>FUNCTION</scope>
    <source>
        <strain>9131</strain>
    </source>
</reference>